<comment type="function">
    <text evidence="4">Catalyzes the oxidative phosphorylation of glyceraldehyde 3-phosphate (G3P) to 1,3-bisphosphoglycerate (BPG) using the cofactor NAD. The first reaction step involves the formation of a hemiacetal intermediate between G3P and a cysteine residue, and this hemiacetal intermediate is then oxidized to a thioester, with concomitant reduction of NAD to NADH. The reduced NADH is then exchanged with the second NAD, and the thioester is attacked by a nucleophilic inorganic phosphate to produce BPG.</text>
</comment>
<comment type="catalytic activity">
    <reaction evidence="2">
        <text>D-glyceraldehyde 3-phosphate + phosphate + NAD(+) = (2R)-3-phospho-glyceroyl phosphate + NADH + H(+)</text>
        <dbReference type="Rhea" id="RHEA:10300"/>
        <dbReference type="ChEBI" id="CHEBI:15378"/>
        <dbReference type="ChEBI" id="CHEBI:43474"/>
        <dbReference type="ChEBI" id="CHEBI:57540"/>
        <dbReference type="ChEBI" id="CHEBI:57604"/>
        <dbReference type="ChEBI" id="CHEBI:57945"/>
        <dbReference type="ChEBI" id="CHEBI:59776"/>
        <dbReference type="EC" id="1.2.1.12"/>
    </reaction>
</comment>
<comment type="pathway">
    <text evidence="6">Carbohydrate degradation; glycolysis; pyruvate from D-glyceraldehyde 3-phosphate: step 1/5.</text>
</comment>
<comment type="subunit">
    <text evidence="4">Homotetramer.</text>
</comment>
<comment type="subcellular location">
    <subcellularLocation>
        <location evidence="6">Cytoplasm</location>
    </subcellularLocation>
</comment>
<comment type="mass spectrometry" mass="36850.0" method="MALDI" evidence="4"/>
<comment type="miscellaneous">
    <text evidence="4">No significant Gap1 activity is detected in cells under different growth conditions. Gap3 is certainly the main GAPDH present in cells.</text>
</comment>
<comment type="similarity">
    <text evidence="6">Belongs to the glyceraldehyde-3-phosphate dehydrogenase family.</text>
</comment>
<organism>
    <name type="scientific">Nostoc sp. (strain PCC 7120 / SAG 25.82 / UTEX 2576)</name>
    <dbReference type="NCBI Taxonomy" id="103690"/>
    <lineage>
        <taxon>Bacteria</taxon>
        <taxon>Bacillati</taxon>
        <taxon>Cyanobacteriota</taxon>
        <taxon>Cyanophyceae</taxon>
        <taxon>Nostocales</taxon>
        <taxon>Nostocaceae</taxon>
        <taxon>Nostoc</taxon>
    </lineage>
</organism>
<name>G3P1_NOSS1</name>
<reference key="1">
    <citation type="journal article" date="2001" name="DNA Res.">
        <title>Complete genomic sequence of the filamentous nitrogen-fixing cyanobacterium Anabaena sp. strain PCC 7120.</title>
        <authorList>
            <person name="Kaneko T."/>
            <person name="Nakamura Y."/>
            <person name="Wolk C.P."/>
            <person name="Kuritz T."/>
            <person name="Sasamoto S."/>
            <person name="Watanabe A."/>
            <person name="Iriguchi M."/>
            <person name="Ishikawa A."/>
            <person name="Kawashima K."/>
            <person name="Kimura T."/>
            <person name="Kishida Y."/>
            <person name="Kohara M."/>
            <person name="Matsumoto M."/>
            <person name="Matsuno A."/>
            <person name="Muraki A."/>
            <person name="Nakazaki N."/>
            <person name="Shimpo S."/>
            <person name="Sugimoto M."/>
            <person name="Takazawa M."/>
            <person name="Yamada M."/>
            <person name="Yasuda M."/>
            <person name="Tabata S."/>
        </authorList>
    </citation>
    <scope>NUCLEOTIDE SEQUENCE [LARGE SCALE GENOMIC DNA]</scope>
    <source>
        <strain>PCC 7120 / SAG 25.82 / UTEX 2576</strain>
    </source>
</reference>
<reference key="2">
    <citation type="journal article" date="2001" name="Biochem. Biophys. Res. Commun.">
        <title>Simultaneous occurrence of two different glyceraldehyde-3-phosphate dehydrogenases in heterocystous N(2)-fixing cyanobacteria.</title>
        <authorList>
            <person name="Valverde F."/>
            <person name="Peleato M.L."/>
            <person name="Fillat M.F."/>
            <person name="Gomez-Moreno C."/>
            <person name="Losada M."/>
            <person name="Serrano A."/>
        </authorList>
    </citation>
    <scope>PROTEIN SEQUENCE OF 2-36</scope>
    <scope>NUCLEOTIDE SEQUENCE [GENOMIC DNA] OF 9-322</scope>
    <scope>FUNCTION</scope>
    <scope>MASS SPECTROMETRY</scope>
    <scope>SUBUNIT</scope>
    <source>
        <strain>PCC 7120 / SAG 25.82 / UTEX 2576</strain>
    </source>
</reference>
<proteinExistence type="evidence at protein level"/>
<gene>
    <name type="primary">gap1</name>
    <name type="ordered locus">all2566</name>
</gene>
<accession>P80506</accession>
<accession>Q93M83</accession>
<evidence type="ECO:0000250" key="1">
    <source>
        <dbReference type="UniProtKB" id="P00362"/>
    </source>
</evidence>
<evidence type="ECO:0000250" key="2">
    <source>
        <dbReference type="UniProtKB" id="P09124"/>
    </source>
</evidence>
<evidence type="ECO:0000250" key="3">
    <source>
        <dbReference type="UniProtKB" id="Q6GIL8"/>
    </source>
</evidence>
<evidence type="ECO:0000269" key="4">
    <source>
    </source>
</evidence>
<evidence type="ECO:0000303" key="5">
    <source>
    </source>
</evidence>
<evidence type="ECO:0000305" key="6"/>
<dbReference type="EC" id="1.2.1.12" evidence="2"/>
<dbReference type="EMBL" id="BA000019">
    <property type="protein sequence ID" value="BAB74265.1"/>
    <property type="molecule type" value="Genomic_DNA"/>
</dbReference>
<dbReference type="EMBL" id="AJ251773">
    <property type="protein sequence ID" value="CAC41000.1"/>
    <property type="molecule type" value="Genomic_DNA"/>
</dbReference>
<dbReference type="PIR" id="AG2126">
    <property type="entry name" value="AG2126"/>
</dbReference>
<dbReference type="SMR" id="P80506"/>
<dbReference type="STRING" id="103690.gene:10494597"/>
<dbReference type="KEGG" id="ana:all2566"/>
<dbReference type="eggNOG" id="COG0057">
    <property type="taxonomic scope" value="Bacteria"/>
</dbReference>
<dbReference type="OrthoDB" id="9803304at2"/>
<dbReference type="UniPathway" id="UPA00109">
    <property type="reaction ID" value="UER00184"/>
</dbReference>
<dbReference type="Proteomes" id="UP000002483">
    <property type="component" value="Chromosome"/>
</dbReference>
<dbReference type="GO" id="GO:0005737">
    <property type="term" value="C:cytoplasm"/>
    <property type="evidence" value="ECO:0007669"/>
    <property type="project" value="UniProtKB-SubCell"/>
</dbReference>
<dbReference type="GO" id="GO:0004365">
    <property type="term" value="F:glyceraldehyde-3-phosphate dehydrogenase (NAD+) (phosphorylating) activity"/>
    <property type="evidence" value="ECO:0000250"/>
    <property type="project" value="UniProtKB"/>
</dbReference>
<dbReference type="GO" id="GO:0051287">
    <property type="term" value="F:NAD binding"/>
    <property type="evidence" value="ECO:0000250"/>
    <property type="project" value="UniProtKB"/>
</dbReference>
<dbReference type="GO" id="GO:0050661">
    <property type="term" value="F:NADP binding"/>
    <property type="evidence" value="ECO:0007669"/>
    <property type="project" value="InterPro"/>
</dbReference>
<dbReference type="GO" id="GO:0006006">
    <property type="term" value="P:glucose metabolic process"/>
    <property type="evidence" value="ECO:0007669"/>
    <property type="project" value="InterPro"/>
</dbReference>
<dbReference type="GO" id="GO:0006096">
    <property type="term" value="P:glycolytic process"/>
    <property type="evidence" value="ECO:0007669"/>
    <property type="project" value="UniProtKB-UniPathway"/>
</dbReference>
<dbReference type="CDD" id="cd18126">
    <property type="entry name" value="GAPDH_I_C"/>
    <property type="match status" value="1"/>
</dbReference>
<dbReference type="CDD" id="cd05214">
    <property type="entry name" value="GAPDH_I_N"/>
    <property type="match status" value="1"/>
</dbReference>
<dbReference type="FunFam" id="3.30.360.10:FF:000001">
    <property type="entry name" value="Glyceraldehyde-3-phosphate dehydrogenase"/>
    <property type="match status" value="1"/>
</dbReference>
<dbReference type="FunFam" id="3.40.50.720:FF:000001">
    <property type="entry name" value="Glyceraldehyde-3-phosphate dehydrogenase"/>
    <property type="match status" value="1"/>
</dbReference>
<dbReference type="FunFam" id="3.40.50.720:FF:000636">
    <property type="entry name" value="Glyceraldehyde-3-phosphate dehydrogenase 2, cytosolic"/>
    <property type="match status" value="1"/>
</dbReference>
<dbReference type="Gene3D" id="3.30.360.10">
    <property type="entry name" value="Dihydrodipicolinate Reductase, domain 2"/>
    <property type="match status" value="1"/>
</dbReference>
<dbReference type="Gene3D" id="3.40.50.720">
    <property type="entry name" value="NAD(P)-binding Rossmann-like Domain"/>
    <property type="match status" value="1"/>
</dbReference>
<dbReference type="InterPro" id="IPR020831">
    <property type="entry name" value="GlycerAld/Erythrose_P_DH"/>
</dbReference>
<dbReference type="InterPro" id="IPR020830">
    <property type="entry name" value="GlycerAld_3-P_DH_AS"/>
</dbReference>
<dbReference type="InterPro" id="IPR020829">
    <property type="entry name" value="GlycerAld_3-P_DH_cat"/>
</dbReference>
<dbReference type="InterPro" id="IPR020828">
    <property type="entry name" value="GlycerAld_3-P_DH_NAD(P)-bd"/>
</dbReference>
<dbReference type="InterPro" id="IPR006424">
    <property type="entry name" value="Glyceraldehyde-3-P_DH_1"/>
</dbReference>
<dbReference type="InterPro" id="IPR036291">
    <property type="entry name" value="NAD(P)-bd_dom_sf"/>
</dbReference>
<dbReference type="NCBIfam" id="TIGR01534">
    <property type="entry name" value="GAPDH-I"/>
    <property type="match status" value="1"/>
</dbReference>
<dbReference type="PANTHER" id="PTHR10836">
    <property type="entry name" value="GLYCERALDEHYDE 3-PHOSPHATE DEHYDROGENASE"/>
    <property type="match status" value="1"/>
</dbReference>
<dbReference type="PANTHER" id="PTHR10836:SF76">
    <property type="entry name" value="GLYCERALDEHYDE-3-PHOSPHATE DEHYDROGENASE-RELATED"/>
    <property type="match status" value="1"/>
</dbReference>
<dbReference type="Pfam" id="PF02800">
    <property type="entry name" value="Gp_dh_C"/>
    <property type="match status" value="1"/>
</dbReference>
<dbReference type="Pfam" id="PF00044">
    <property type="entry name" value="Gp_dh_N"/>
    <property type="match status" value="1"/>
</dbReference>
<dbReference type="PIRSF" id="PIRSF000149">
    <property type="entry name" value="GAP_DH"/>
    <property type="match status" value="1"/>
</dbReference>
<dbReference type="PRINTS" id="PR00078">
    <property type="entry name" value="G3PDHDRGNASE"/>
</dbReference>
<dbReference type="SMART" id="SM00846">
    <property type="entry name" value="Gp_dh_N"/>
    <property type="match status" value="1"/>
</dbReference>
<dbReference type="SUPFAM" id="SSF55347">
    <property type="entry name" value="Glyceraldehyde-3-phosphate dehydrogenase-like, C-terminal domain"/>
    <property type="match status" value="1"/>
</dbReference>
<dbReference type="SUPFAM" id="SSF51735">
    <property type="entry name" value="NAD(P)-binding Rossmann-fold domains"/>
    <property type="match status" value="1"/>
</dbReference>
<dbReference type="PROSITE" id="PS00071">
    <property type="entry name" value="GAPDH"/>
    <property type="match status" value="1"/>
</dbReference>
<keyword id="KW-0963">Cytoplasm</keyword>
<keyword id="KW-0903">Direct protein sequencing</keyword>
<keyword id="KW-0324">Glycolysis</keyword>
<keyword id="KW-0520">NAD</keyword>
<keyword id="KW-0547">Nucleotide-binding</keyword>
<keyword id="KW-0560">Oxidoreductase</keyword>
<keyword id="KW-1185">Reference proteome</keyword>
<feature type="initiator methionine" description="Removed" evidence="4">
    <location>
        <position position="1"/>
    </location>
</feature>
<feature type="chain" id="PRO_0000145623" description="Glyceraldehyde-3-phosphate dehydrogenase 1">
    <location>
        <begin position="2"/>
        <end position="343"/>
    </location>
</feature>
<feature type="active site" description="Nucleophile" evidence="1">
    <location>
        <position position="155"/>
    </location>
</feature>
<feature type="binding site" evidence="1">
    <location>
        <begin position="13"/>
        <end position="14"/>
    </location>
    <ligand>
        <name>NAD(+)</name>
        <dbReference type="ChEBI" id="CHEBI:57540"/>
    </ligand>
</feature>
<feature type="binding site" evidence="1">
    <location>
        <position position="35"/>
    </location>
    <ligand>
        <name>NAD(+)</name>
        <dbReference type="ChEBI" id="CHEBI:57540"/>
    </ligand>
</feature>
<feature type="binding site" evidence="1">
    <location>
        <position position="79"/>
    </location>
    <ligand>
        <name>NAD(+)</name>
        <dbReference type="ChEBI" id="CHEBI:57540"/>
    </ligand>
</feature>
<feature type="binding site" evidence="1">
    <location>
        <position position="121"/>
    </location>
    <ligand>
        <name>NAD(+)</name>
        <dbReference type="ChEBI" id="CHEBI:57540"/>
    </ligand>
</feature>
<feature type="binding site" evidence="1">
    <location>
        <begin position="154"/>
        <end position="156"/>
    </location>
    <ligand>
        <name>D-glyceraldehyde 3-phosphate</name>
        <dbReference type="ChEBI" id="CHEBI:59776"/>
    </ligand>
</feature>
<feature type="binding site" evidence="1">
    <location>
        <position position="185"/>
    </location>
    <ligand>
        <name>D-glyceraldehyde 3-phosphate</name>
        <dbReference type="ChEBI" id="CHEBI:59776"/>
    </ligand>
</feature>
<feature type="binding site" evidence="1">
    <location>
        <begin position="214"/>
        <end position="215"/>
    </location>
    <ligand>
        <name>D-glyceraldehyde 3-phosphate</name>
        <dbReference type="ChEBI" id="CHEBI:59776"/>
    </ligand>
</feature>
<feature type="binding site" evidence="1">
    <location>
        <position position="237"/>
    </location>
    <ligand>
        <name>D-glyceraldehyde 3-phosphate</name>
        <dbReference type="ChEBI" id="CHEBI:59776"/>
    </ligand>
</feature>
<feature type="binding site" evidence="1">
    <location>
        <position position="319"/>
    </location>
    <ligand>
        <name>NAD(+)</name>
        <dbReference type="ChEBI" id="CHEBI:57540"/>
    </ligand>
</feature>
<feature type="site" description="Activates thiol group during catalysis" evidence="3">
    <location>
        <position position="182"/>
    </location>
</feature>
<sequence length="343" mass="36752">MAKLKVGINGFGRIGRLVLRAGINNPNIEFVGINDLVPPDNLAYLLKYDSTHGRLRSQVETKDDGIVIDGHFIPCVSVRNPAELPWGKLGADYVVESTGLFTDSEGASKHLQAGARRVIISAPTKDPDRVRTLLVGVNHDLFDPSKDLIVSNASCTTNCLAPIAKVINDNFGLTEGLMTTVHAMTATQPTVDGPSKKDWRGGRGAAQNIIPSSTGAAKAVALVLPELKGKLTGMAFRVPTPDVSVVDLTFKTAKATSYKEICAAMKQASEGSLAGILGYTDEEVVSTDFQGDTHSSIFDAGAGIELNSNFFKVVAWYDNEWGYSNRVVDLMLSMVQKEQLAAV</sequence>
<protein>
    <recommendedName>
        <fullName evidence="5">Glyceraldehyde-3-phosphate dehydrogenase 1</fullName>
        <shortName evidence="5">GAPDH 1</shortName>
        <ecNumber evidence="2">1.2.1.12</ecNumber>
    </recommendedName>
    <alternativeName>
        <fullName evidence="5">NAD-dependent glyceraldehyde-3-phosphate dehydrogenase</fullName>
    </alternativeName>
</protein>